<accession>P72295</accession>
<evidence type="ECO:0000250" key="1"/>
<evidence type="ECO:0000255" key="2">
    <source>
        <dbReference type="PROSITE-ProRule" id="PRU00441"/>
    </source>
</evidence>
<evidence type="ECO:0000305" key="3"/>
<protein>
    <recommendedName>
        <fullName>Octopine transport system permease protein OccQ</fullName>
    </recommendedName>
</protein>
<name>OCCQ_RHIML</name>
<sequence length="237" mass="24887">MGYLQLMGFGPDGWGSDMLRATGMTVAVASSAFTIGLVFGCLGATASFSKSLALQAAASSYTTALRGIPDLLVIYLFYFGSSSLISGVGSLFGSDGFVSAPAFLTGALAIGLVSAAYQTQVLRGAVLALNKGEIEAGRAYGMGYFLLFRRIILPQAARHALPGVGNVWQLVLKESALISVIGLVELMRQAQVGSGSTRQPFSFYLTAAALYLLITFISGQAFRLAEARSMRGLRRGV</sequence>
<dbReference type="EMBL" id="U66830">
    <property type="protein sequence ID" value="AAB07518.1"/>
    <property type="molecule type" value="Genomic_DNA"/>
</dbReference>
<dbReference type="SMR" id="P72295"/>
<dbReference type="GO" id="GO:0043190">
    <property type="term" value="C:ATP-binding cassette (ABC) transporter complex"/>
    <property type="evidence" value="ECO:0007669"/>
    <property type="project" value="InterPro"/>
</dbReference>
<dbReference type="GO" id="GO:0022857">
    <property type="term" value="F:transmembrane transporter activity"/>
    <property type="evidence" value="ECO:0007669"/>
    <property type="project" value="InterPro"/>
</dbReference>
<dbReference type="CDD" id="cd06261">
    <property type="entry name" value="TM_PBP2"/>
    <property type="match status" value="1"/>
</dbReference>
<dbReference type="Gene3D" id="1.10.3720.10">
    <property type="entry name" value="MetI-like"/>
    <property type="match status" value="1"/>
</dbReference>
<dbReference type="InterPro" id="IPR010065">
    <property type="entry name" value="AA_ABC_transptr_permease_3TM"/>
</dbReference>
<dbReference type="InterPro" id="IPR051613">
    <property type="entry name" value="ABC_transp_permease_HisMQ"/>
</dbReference>
<dbReference type="InterPro" id="IPR000515">
    <property type="entry name" value="MetI-like"/>
</dbReference>
<dbReference type="InterPro" id="IPR035906">
    <property type="entry name" value="MetI-like_sf"/>
</dbReference>
<dbReference type="NCBIfam" id="TIGR01726">
    <property type="entry name" value="HEQRo_perm_3TM"/>
    <property type="match status" value="1"/>
</dbReference>
<dbReference type="PANTHER" id="PTHR30133:SF2">
    <property type="entry name" value="ARGININE ABC TRANSPORTER PERMEASE PROTEIN ARTQ"/>
    <property type="match status" value="1"/>
</dbReference>
<dbReference type="PANTHER" id="PTHR30133">
    <property type="entry name" value="CATIONIC AMINO ACID TRANSPORTER, MEMBRANE COMPONENT"/>
    <property type="match status" value="1"/>
</dbReference>
<dbReference type="Pfam" id="PF00528">
    <property type="entry name" value="BPD_transp_1"/>
    <property type="match status" value="1"/>
</dbReference>
<dbReference type="SUPFAM" id="SSF161098">
    <property type="entry name" value="MetI-like"/>
    <property type="match status" value="1"/>
</dbReference>
<dbReference type="PROSITE" id="PS50928">
    <property type="entry name" value="ABC_TM1"/>
    <property type="match status" value="1"/>
</dbReference>
<feature type="chain" id="PRO_0000060132" description="Octopine transport system permease protein OccQ">
    <location>
        <begin position="1"/>
        <end position="237"/>
    </location>
</feature>
<feature type="transmembrane region" description="Helical" evidence="2">
    <location>
        <begin position="24"/>
        <end position="44"/>
    </location>
</feature>
<feature type="transmembrane region" description="Helical" evidence="2">
    <location>
        <begin position="72"/>
        <end position="92"/>
    </location>
</feature>
<feature type="transmembrane region" description="Helical" evidence="2">
    <location>
        <begin position="96"/>
        <end position="116"/>
    </location>
</feature>
<feature type="transmembrane region" description="Helical" evidence="2">
    <location>
        <begin position="201"/>
        <end position="221"/>
    </location>
</feature>
<feature type="domain" description="ABC transmembrane type-1" evidence="2">
    <location>
        <begin position="22"/>
        <end position="222"/>
    </location>
</feature>
<proteinExistence type="inferred from homology"/>
<comment type="function">
    <text>Component of the octopine active transport system probably consisting of four subunits: Q, M, P and T.</text>
</comment>
<comment type="subcellular location">
    <subcellularLocation>
        <location evidence="1">Cell inner membrane</location>
        <topology evidence="2">Multi-pass membrane protein</topology>
    </subcellularLocation>
</comment>
<comment type="similarity">
    <text evidence="3">Belongs to the binding-protein-dependent transport system permease family. HisMQ subfamily.</text>
</comment>
<keyword id="KW-0997">Cell inner membrane</keyword>
<keyword id="KW-1003">Cell membrane</keyword>
<keyword id="KW-0472">Membrane</keyword>
<keyword id="KW-0812">Transmembrane</keyword>
<keyword id="KW-1133">Transmembrane helix</keyword>
<keyword id="KW-0813">Transport</keyword>
<gene>
    <name type="primary">occQ</name>
</gene>
<organism>
    <name type="scientific">Rhizobium meliloti</name>
    <name type="common">Ensifer meliloti</name>
    <name type="synonym">Sinorhizobium meliloti</name>
    <dbReference type="NCBI Taxonomy" id="382"/>
    <lineage>
        <taxon>Bacteria</taxon>
        <taxon>Pseudomonadati</taxon>
        <taxon>Pseudomonadota</taxon>
        <taxon>Alphaproteobacteria</taxon>
        <taxon>Hyphomicrobiales</taxon>
        <taxon>Rhizobiaceae</taxon>
        <taxon>Sinorhizobium/Ensifer group</taxon>
        <taxon>Sinorhizobium</taxon>
    </lineage>
</organism>
<reference key="1">
    <citation type="submission" date="1996-08" db="EMBL/GenBank/DDBJ databases">
        <title>The octopine catabolism operon of Rhizobium meliloti A3.</title>
        <authorList>
            <person name="Au S."/>
            <person name="Bergeron J."/>
            <person name="Dion P."/>
        </authorList>
    </citation>
    <scope>NUCLEOTIDE SEQUENCE [GENOMIC DNA]</scope>
    <source>
        <strain>A3</strain>
    </source>
</reference>